<comment type="function">
    <text evidence="1">Catalyzes the dehydration of methylthioribulose-1-phosphate (MTRu-1-P) into 2,3-diketo-5-methylthiopentyl-1-phosphate (DK-MTP-1-P).</text>
</comment>
<comment type="catalytic activity">
    <reaction evidence="1">
        <text>5-(methylsulfanyl)-D-ribulose 1-phosphate = 5-methylsulfanyl-2,3-dioxopentyl phosphate + H2O</text>
        <dbReference type="Rhea" id="RHEA:15549"/>
        <dbReference type="ChEBI" id="CHEBI:15377"/>
        <dbReference type="ChEBI" id="CHEBI:58548"/>
        <dbReference type="ChEBI" id="CHEBI:58828"/>
        <dbReference type="EC" id="4.2.1.109"/>
    </reaction>
</comment>
<comment type="cofactor">
    <cofactor evidence="1">
        <name>Zn(2+)</name>
        <dbReference type="ChEBI" id="CHEBI:29105"/>
    </cofactor>
    <text evidence="1">Binds 1 zinc ion per subunit.</text>
</comment>
<comment type="pathway">
    <text evidence="1">Amino-acid biosynthesis; L-methionine biosynthesis via salvage pathway; L-methionine from S-methyl-5-thio-alpha-D-ribose 1-phosphate: step 2/6.</text>
</comment>
<comment type="subunit">
    <text evidence="1">Homotetramer.</text>
</comment>
<comment type="similarity">
    <text evidence="1">Belongs to the aldolase class II family. MtnB subfamily.</text>
</comment>
<accession>A7GS62</accession>
<feature type="chain" id="PRO_0000357067" description="Methylthioribulose-1-phosphate dehydratase">
    <location>
        <begin position="1"/>
        <end position="212"/>
    </location>
</feature>
<feature type="binding site" evidence="1">
    <location>
        <position position="97"/>
    </location>
    <ligand>
        <name>Zn(2+)</name>
        <dbReference type="ChEBI" id="CHEBI:29105"/>
    </ligand>
</feature>
<feature type="binding site" evidence="1">
    <location>
        <position position="99"/>
    </location>
    <ligand>
        <name>Zn(2+)</name>
        <dbReference type="ChEBI" id="CHEBI:29105"/>
    </ligand>
</feature>
<organism>
    <name type="scientific">Bacillus cytotoxicus (strain DSM 22905 / CIP 110041 / 391-98 / NVH 391-98)</name>
    <dbReference type="NCBI Taxonomy" id="315749"/>
    <lineage>
        <taxon>Bacteria</taxon>
        <taxon>Bacillati</taxon>
        <taxon>Bacillota</taxon>
        <taxon>Bacilli</taxon>
        <taxon>Bacillales</taxon>
        <taxon>Bacillaceae</taxon>
        <taxon>Bacillus</taxon>
        <taxon>Bacillus cereus group</taxon>
    </lineage>
</organism>
<protein>
    <recommendedName>
        <fullName evidence="1">Methylthioribulose-1-phosphate dehydratase</fullName>
        <shortName evidence="1">MTRu-1-P dehydratase</shortName>
        <ecNumber evidence="1">4.2.1.109</ecNumber>
    </recommendedName>
</protein>
<keyword id="KW-0028">Amino-acid biosynthesis</keyword>
<keyword id="KW-0456">Lyase</keyword>
<keyword id="KW-0479">Metal-binding</keyword>
<keyword id="KW-0486">Methionine biosynthesis</keyword>
<keyword id="KW-0862">Zinc</keyword>
<evidence type="ECO:0000255" key="1">
    <source>
        <dbReference type="HAMAP-Rule" id="MF_01677"/>
    </source>
</evidence>
<proteinExistence type="inferred from homology"/>
<dbReference type="EC" id="4.2.1.109" evidence="1"/>
<dbReference type="EMBL" id="CP000764">
    <property type="protein sequence ID" value="ABS22970.1"/>
    <property type="molecule type" value="Genomic_DNA"/>
</dbReference>
<dbReference type="RefSeq" id="WP_012095195.1">
    <property type="nucleotide sequence ID" value="NC_009674.1"/>
</dbReference>
<dbReference type="SMR" id="A7GS62"/>
<dbReference type="STRING" id="315749.Bcer98_2737"/>
<dbReference type="GeneID" id="33897991"/>
<dbReference type="KEGG" id="bcy:Bcer98_2737"/>
<dbReference type="eggNOG" id="COG0235">
    <property type="taxonomic scope" value="Bacteria"/>
</dbReference>
<dbReference type="HOGENOM" id="CLU_006033_4_1_9"/>
<dbReference type="OrthoDB" id="9805559at2"/>
<dbReference type="UniPathway" id="UPA00904">
    <property type="reaction ID" value="UER00875"/>
</dbReference>
<dbReference type="Proteomes" id="UP000002300">
    <property type="component" value="Chromosome"/>
</dbReference>
<dbReference type="GO" id="GO:0005737">
    <property type="term" value="C:cytoplasm"/>
    <property type="evidence" value="ECO:0007669"/>
    <property type="project" value="InterPro"/>
</dbReference>
<dbReference type="GO" id="GO:0046570">
    <property type="term" value="F:methylthioribulose 1-phosphate dehydratase activity"/>
    <property type="evidence" value="ECO:0007669"/>
    <property type="project" value="UniProtKB-UniRule"/>
</dbReference>
<dbReference type="GO" id="GO:0008270">
    <property type="term" value="F:zinc ion binding"/>
    <property type="evidence" value="ECO:0007669"/>
    <property type="project" value="UniProtKB-UniRule"/>
</dbReference>
<dbReference type="GO" id="GO:0019509">
    <property type="term" value="P:L-methionine salvage from methylthioadenosine"/>
    <property type="evidence" value="ECO:0007669"/>
    <property type="project" value="UniProtKB-UniRule"/>
</dbReference>
<dbReference type="FunFam" id="3.40.225.10:FF:000007">
    <property type="entry name" value="Methylthioribulose-1-phosphate dehydratase"/>
    <property type="match status" value="1"/>
</dbReference>
<dbReference type="Gene3D" id="3.40.225.10">
    <property type="entry name" value="Class II aldolase/adducin N-terminal domain"/>
    <property type="match status" value="1"/>
</dbReference>
<dbReference type="HAMAP" id="MF_01677">
    <property type="entry name" value="Salvage_MtnB"/>
    <property type="match status" value="1"/>
</dbReference>
<dbReference type="InterPro" id="IPR001303">
    <property type="entry name" value="Aldolase_II/adducin_N"/>
</dbReference>
<dbReference type="InterPro" id="IPR036409">
    <property type="entry name" value="Aldolase_II/adducin_N_sf"/>
</dbReference>
<dbReference type="InterPro" id="IPR017714">
    <property type="entry name" value="MethylthioRu-1-P_deHdtase_MtnB"/>
</dbReference>
<dbReference type="NCBIfam" id="NF005244">
    <property type="entry name" value="PRK06754.1"/>
    <property type="match status" value="1"/>
</dbReference>
<dbReference type="NCBIfam" id="TIGR03328">
    <property type="entry name" value="salvage_mtnB"/>
    <property type="match status" value="1"/>
</dbReference>
<dbReference type="PANTHER" id="PTHR10640">
    <property type="entry name" value="METHYLTHIORIBULOSE-1-PHOSPHATE DEHYDRATASE"/>
    <property type="match status" value="1"/>
</dbReference>
<dbReference type="PANTHER" id="PTHR10640:SF7">
    <property type="entry name" value="METHYLTHIORIBULOSE-1-PHOSPHATE DEHYDRATASE"/>
    <property type="match status" value="1"/>
</dbReference>
<dbReference type="Pfam" id="PF00596">
    <property type="entry name" value="Aldolase_II"/>
    <property type="match status" value="1"/>
</dbReference>
<dbReference type="SMART" id="SM01007">
    <property type="entry name" value="Aldolase_II"/>
    <property type="match status" value="1"/>
</dbReference>
<dbReference type="SUPFAM" id="SSF53639">
    <property type="entry name" value="AraD/HMP-PK domain-like"/>
    <property type="match status" value="1"/>
</dbReference>
<reference key="1">
    <citation type="journal article" date="2008" name="Chem. Biol. Interact.">
        <title>Extending the Bacillus cereus group genomics to putative food-borne pathogens of different toxicity.</title>
        <authorList>
            <person name="Lapidus A."/>
            <person name="Goltsman E."/>
            <person name="Auger S."/>
            <person name="Galleron N."/>
            <person name="Segurens B."/>
            <person name="Dossat C."/>
            <person name="Land M.L."/>
            <person name="Broussolle V."/>
            <person name="Brillard J."/>
            <person name="Guinebretiere M.-H."/>
            <person name="Sanchis V."/>
            <person name="Nguen-the C."/>
            <person name="Lereclus D."/>
            <person name="Richardson P."/>
            <person name="Wincker P."/>
            <person name="Weissenbach J."/>
            <person name="Ehrlich S.D."/>
            <person name="Sorokin A."/>
        </authorList>
    </citation>
    <scope>NUCLEOTIDE SEQUENCE [LARGE SCALE GENOMIC DNA]</scope>
    <source>
        <strain>DSM 22905 / CIP 110041 / 391-98 / NVH 391-98</strain>
    </source>
</reference>
<gene>
    <name evidence="1" type="primary">mtnB</name>
    <name type="ordered locus">Bcer98_2737</name>
</gene>
<sequence>MKQLFRKWHTLSELKKELTNRNWFPATSGNISIKVSHEPLTFLISASGKDKTKTTPDDFLLVDHQGNPVLETELRPSAETILHTHIYNHTNAGCVLHVHTTDNNVITNLYEKEVMIRNQEIIKALNIWEEGATIHIPIIENYAHIPLLGEAFKKHIQSDCGAVLIRNHGITVWGKDSFDAKKRLEAYEFLFQFHIKLLSIQGGVSSGANSYS</sequence>
<name>MTNB_BACCN</name>